<comment type="function">
    <text evidence="1">Necessary for signaling by class 3 semaphorins and subsequent remodeling of the cytoskeleton. Plays a role in axon guidance, neuronal growth cone collapse and cell migration (By similarity).</text>
</comment>
<comment type="subunit">
    <text evidence="3 6">Homotetramer, and heterotetramer with CRMP1, DPYSL2, DPYSL4 or DPYSL5 (By similarity). Interacts with synaptic vesicle protein 2 and SH3A domain of intersectin (By similarity). Interacts with FLNA (PubMed:25358863).</text>
</comment>
<comment type="interaction">
    <interactant intactId="EBI-1104726">
        <id>Q14195</id>
    </interactant>
    <interactant intactId="EBI-717666">
        <id>Q96AP0</id>
        <label>ACD</label>
    </interactant>
    <organismsDiffer>false</organismsDiffer>
    <experiments>2</experiments>
</comment>
<comment type="interaction">
    <interactant intactId="EBI-1104726">
        <id>Q14195</id>
    </interactant>
    <interactant intactId="EBI-1104711">
        <id>Q16555</id>
        <label>DPYSL2</label>
    </interactant>
    <organismsDiffer>false</organismsDiffer>
    <experiments>7</experiments>
</comment>
<comment type="interaction">
    <interactant intactId="EBI-10232496">
        <id>Q14195-2</id>
    </interactant>
    <interactant intactId="EBI-473101">
        <id>Q14194</id>
        <label>CRMP1</label>
    </interactant>
    <organismsDiffer>false</organismsDiffer>
    <experiments>6</experiments>
</comment>
<comment type="interaction">
    <interactant intactId="EBI-10232496">
        <id>Q14195-2</id>
    </interactant>
    <interactant intactId="EBI-1104711">
        <id>Q16555</id>
        <label>DPYSL2</label>
    </interactant>
    <organismsDiffer>false</organismsDiffer>
    <experiments>10</experiments>
</comment>
<comment type="interaction">
    <interactant intactId="EBI-10232496">
        <id>Q14195-2</id>
    </interactant>
    <interactant intactId="EBI-724653">
        <id>Q9BPU6</id>
        <label>DPYSL5</label>
    </interactant>
    <organismsDiffer>false</organismsDiffer>
    <experiments>3</experiments>
</comment>
<comment type="interaction">
    <interactant intactId="EBI-10232496">
        <id>Q14195-2</id>
    </interactant>
    <interactant intactId="EBI-11960139">
        <id>Q7L8S5</id>
        <label>OTUD6A</label>
    </interactant>
    <organismsDiffer>false</organismsDiffer>
    <experiments>3</experiments>
</comment>
<comment type="subcellular location">
    <subcellularLocation>
        <location evidence="1">Cytoplasm</location>
    </subcellularLocation>
    <subcellularLocation>
        <location evidence="1">Cell projection</location>
        <location evidence="1">Growth cone</location>
    </subcellularLocation>
    <text evidence="1">Colocalizes with synaptic vesicle protein 2 in the central region of the growth cone.</text>
</comment>
<comment type="alternative products">
    <event type="alternative splicing"/>
    <isoform>
        <id>Q14195-1</id>
        <name>1</name>
        <sequence type="displayed"/>
    </isoform>
    <isoform>
        <id>Q14195-2</id>
        <name>LCRMP-4</name>
        <sequence type="described" ref="VSP_042546"/>
    </isoform>
</comment>
<comment type="tissue specificity">
    <text>Mainly expressed in heart and skeletal muscle. Also strongly expressed in fetal brain and spinal cord.</text>
</comment>
<comment type="PTM">
    <text evidence="5">Phosphorylation on Ser-522 by DYRK2 promotes subsequent phosphorylation on Thr-509, Thr-514 and Ser-518 by GSK3.</text>
</comment>
<comment type="similarity">
    <text evidence="8">Belongs to the metallo-dependent hydrolases superfamily. Hydantoinase/dihydropyrimidinase family.</text>
</comment>
<comment type="caution">
    <text evidence="8">Lacks most of the conserved residues that are essential for binding the metal cofactor and hence for dihydropyrimidinase activity. Its enzyme activity is therefore unsure.</text>
</comment>
<protein>
    <recommendedName>
        <fullName>Dihydropyrimidinase-related protein 3</fullName>
        <shortName>DRP-3</shortName>
    </recommendedName>
    <alternativeName>
        <fullName>Collapsin response mediator protein 4</fullName>
        <shortName>CRMP-4</shortName>
    </alternativeName>
    <alternativeName>
        <fullName>Unc-33-like phosphoprotein 1</fullName>
        <shortName>ULIP-1</shortName>
    </alternativeName>
</protein>
<sequence length="570" mass="61963">MSYQGKKNIPRITSDRLLIKGGRIVNDDQSFYADIYMEDGLIKQIGDNLIVPGGVKTIEANGKMVIPGGIDVHTHFQMPYKGMTTVDDFFQGTKAALAGGTTMIIDHVVPEPESSLTEAYEKWREWADGKSCCDYALHVDITHWNDSVKQEVQNLIKDKGVNSFMVYMAYKDLYQVSNTELYEIFTCLGELGAIAQVHAENGDIIAQEQTRMLEMGITGPEGHVLSRPEELEAEAVFRAITIASQTNCPLYVTKVMSKSAADLISQARKKGNVVFGEPITASLGIDGTHYWSKNWAKAAAFVTSPPLSPDPTTPDYINSLLASGDLQLSGSAHCTFSTAQKAIGKDNFTAIPEGTNGVEERMSVIWDKAVATGKMDENQFVAVTSTNAAKIFNLYPRKGRISVGSDSDLVIWDPDAVKIVSAKNHQSAAEYNIFEGMELRGAPLVVICQGKIMLEDGNLHVTQGAGRFIPCSPFSDYVYKRIKARRKMADLHAVPRGMYDGPVFDLTTTPKGGTPAGSARGSPTRPNPPVRNLHQSGFSLSGTQVDEGVRSASKRIVAPPGGRSNITSLS</sequence>
<name>DPYL3_HUMAN</name>
<accession>Q14195</accession>
<accession>B3SXQ8</accession>
<accession>Q93012</accession>
<evidence type="ECO:0000250" key="1"/>
<evidence type="ECO:0000250" key="2">
    <source>
        <dbReference type="UniProtKB" id="Q62188"/>
    </source>
</evidence>
<evidence type="ECO:0000250" key="3">
    <source>
        <dbReference type="UniProtKB" id="Q62952"/>
    </source>
</evidence>
<evidence type="ECO:0000256" key="4">
    <source>
        <dbReference type="SAM" id="MobiDB-lite"/>
    </source>
</evidence>
<evidence type="ECO:0000269" key="5">
    <source>
    </source>
</evidence>
<evidence type="ECO:0000269" key="6">
    <source>
    </source>
</evidence>
<evidence type="ECO:0000303" key="7">
    <source ref="3"/>
</evidence>
<evidence type="ECO:0000305" key="8"/>
<evidence type="ECO:0007744" key="9">
    <source>
    </source>
</evidence>
<evidence type="ECO:0007744" key="10">
    <source>
    </source>
</evidence>
<evidence type="ECO:0007744" key="11">
    <source>
    </source>
</evidence>
<evidence type="ECO:0007829" key="12">
    <source>
        <dbReference type="PDB" id="4BKN"/>
    </source>
</evidence>
<proteinExistence type="evidence at protein level"/>
<feature type="chain" id="PRO_0000165917" description="Dihydropyrimidinase-related protein 3">
    <location>
        <begin position="1"/>
        <end position="570"/>
    </location>
</feature>
<feature type="region of interest" description="Disordered" evidence="4">
    <location>
        <begin position="506"/>
        <end position="570"/>
    </location>
</feature>
<feature type="compositionally biased region" description="Polar residues" evidence="4">
    <location>
        <begin position="533"/>
        <end position="544"/>
    </location>
</feature>
<feature type="modified residue" description="Phosphoserine" evidence="10">
    <location>
        <position position="259"/>
    </location>
</feature>
<feature type="modified residue" description="Phosphotyrosine" evidence="2">
    <location>
        <position position="431"/>
    </location>
</feature>
<feature type="modified residue" description="Phosphotyrosine" evidence="2">
    <location>
        <position position="499"/>
    </location>
</feature>
<feature type="modified residue" description="Phosphothreonine; by GSK3" evidence="5 10 11">
    <location>
        <position position="509"/>
    </location>
</feature>
<feature type="modified residue" description="Phosphothreonine; by GSK3" evidence="5 10">
    <location>
        <position position="514"/>
    </location>
</feature>
<feature type="modified residue" description="Phosphoserine; by GSK3" evidence="5">
    <location>
        <position position="518"/>
    </location>
</feature>
<feature type="modified residue" description="Phosphoserine; by DYRK2" evidence="5 10 11">
    <location>
        <position position="522"/>
    </location>
</feature>
<feature type="modified residue" description="Phosphoserine" evidence="2">
    <location>
        <position position="536"/>
    </location>
</feature>
<feature type="modified residue" description="Phosphoserine" evidence="2">
    <location>
        <position position="539"/>
    </location>
</feature>
<feature type="modified residue" description="Phosphoserine" evidence="2">
    <location>
        <position position="541"/>
    </location>
</feature>
<feature type="modified residue" description="Phosphothreonine" evidence="2">
    <location>
        <position position="543"/>
    </location>
</feature>
<feature type="splice variant" id="VSP_042546" description="In isoform LCRMP-4." evidence="7">
    <original>MSYQGKKNIPRIT</original>
    <variation>MASGRRGWDSSHEDDLPVYLARPGTTDQVPRQKYGGMFCNVEGAFESKTLDFDALSVGQRGAKTPRSGQGSDRGSGSRPGIEGDTPRRGQGREESREPAPASPAPAGVEIRSATGKEVLQNLGPKDK</variation>
    <location>
        <begin position="1"/>
        <end position="13"/>
    </location>
</feature>
<feature type="sequence variant" id="VAR_020485" description="In dbSNP:rs2304044.">
    <original>A</original>
    <variation>S</variation>
    <location>
        <position position="442"/>
    </location>
</feature>
<feature type="sequence conflict" description="In Ref. 2; CAA69153." evidence="8" ref="2">
    <original>L</original>
    <variation>V</variation>
    <location>
        <position position="49"/>
    </location>
</feature>
<feature type="sequence conflict" description="In Ref. 2; CAA69153." evidence="8" ref="2">
    <original>T</original>
    <variation>A</variation>
    <location>
        <position position="142"/>
    </location>
</feature>
<feature type="strand" evidence="12">
    <location>
        <begin position="17"/>
        <end position="25"/>
    </location>
</feature>
<feature type="strand" evidence="12">
    <location>
        <begin position="30"/>
        <end position="38"/>
    </location>
</feature>
<feature type="strand" evidence="12">
    <location>
        <begin position="41"/>
        <end position="48"/>
    </location>
</feature>
<feature type="strand" evidence="12">
    <location>
        <begin position="56"/>
        <end position="59"/>
    </location>
</feature>
<feature type="strand" evidence="12">
    <location>
        <begin position="64"/>
        <end position="67"/>
    </location>
</feature>
<feature type="strand" evidence="12">
    <location>
        <begin position="69"/>
        <end position="74"/>
    </location>
</feature>
<feature type="helix" evidence="12">
    <location>
        <begin position="89"/>
        <end position="98"/>
    </location>
</feature>
<feature type="strand" evidence="12">
    <location>
        <begin position="101"/>
        <end position="108"/>
    </location>
</feature>
<feature type="helix" evidence="12">
    <location>
        <begin position="116"/>
        <end position="130"/>
    </location>
</feature>
<feature type="strand" evidence="12">
    <location>
        <begin position="132"/>
        <end position="141"/>
    </location>
</feature>
<feature type="helix" evidence="12">
    <location>
        <begin position="146"/>
        <end position="158"/>
    </location>
</feature>
<feature type="strand" evidence="12">
    <location>
        <begin position="163"/>
        <end position="168"/>
    </location>
</feature>
<feature type="turn" evidence="12">
    <location>
        <begin position="171"/>
        <end position="174"/>
    </location>
</feature>
<feature type="helix" evidence="12">
    <location>
        <begin position="178"/>
        <end position="191"/>
    </location>
</feature>
<feature type="strand" evidence="12">
    <location>
        <begin position="194"/>
        <end position="198"/>
    </location>
</feature>
<feature type="helix" evidence="12">
    <location>
        <begin position="202"/>
        <end position="214"/>
    </location>
</feature>
<feature type="helix" evidence="12">
    <location>
        <begin position="221"/>
        <end position="225"/>
    </location>
</feature>
<feature type="helix" evidence="12">
    <location>
        <begin position="229"/>
        <end position="245"/>
    </location>
</feature>
<feature type="strand" evidence="12">
    <location>
        <begin position="250"/>
        <end position="255"/>
    </location>
</feature>
<feature type="helix" evidence="12">
    <location>
        <begin position="258"/>
        <end position="270"/>
    </location>
</feature>
<feature type="strand" evidence="12">
    <location>
        <begin position="274"/>
        <end position="279"/>
    </location>
</feature>
<feature type="helix" evidence="12">
    <location>
        <begin position="280"/>
        <end position="284"/>
    </location>
</feature>
<feature type="helix" evidence="12">
    <location>
        <begin position="287"/>
        <end position="291"/>
    </location>
</feature>
<feature type="helix" evidence="12">
    <location>
        <begin position="295"/>
        <end position="300"/>
    </location>
</feature>
<feature type="helix" evidence="12">
    <location>
        <begin position="313"/>
        <end position="322"/>
    </location>
</feature>
<feature type="helix" evidence="12">
    <location>
        <begin position="338"/>
        <end position="341"/>
    </location>
</feature>
<feature type="helix" evidence="12">
    <location>
        <begin position="342"/>
        <end position="344"/>
    </location>
</feature>
<feature type="helix" evidence="12">
    <location>
        <begin position="348"/>
        <end position="350"/>
    </location>
</feature>
<feature type="turn" evidence="12">
    <location>
        <begin position="358"/>
        <end position="360"/>
    </location>
</feature>
<feature type="helix" evidence="12">
    <location>
        <begin position="361"/>
        <end position="369"/>
    </location>
</feature>
<feature type="turn" evidence="12">
    <location>
        <begin position="370"/>
        <end position="373"/>
    </location>
</feature>
<feature type="helix" evidence="12">
    <location>
        <begin position="377"/>
        <end position="384"/>
    </location>
</feature>
<feature type="helix" evidence="12">
    <location>
        <begin position="386"/>
        <end position="391"/>
    </location>
</feature>
<feature type="turn" evidence="12">
    <location>
        <begin position="395"/>
        <end position="397"/>
    </location>
</feature>
<feature type="strand" evidence="12">
    <location>
        <begin position="409"/>
        <end position="419"/>
    </location>
</feature>
<feature type="turn" evidence="12">
    <location>
        <begin position="422"/>
        <end position="424"/>
    </location>
</feature>
<feature type="strand" evidence="12">
    <location>
        <begin position="426"/>
        <end position="428"/>
    </location>
</feature>
<feature type="turn" evidence="12">
    <location>
        <begin position="433"/>
        <end position="436"/>
    </location>
</feature>
<feature type="strand" evidence="12">
    <location>
        <begin position="438"/>
        <end position="448"/>
    </location>
</feature>
<feature type="strand" evidence="12">
    <location>
        <begin position="451"/>
        <end position="455"/>
    </location>
</feature>
<feature type="helix" evidence="12">
    <location>
        <begin position="476"/>
        <end position="487"/>
    </location>
</feature>
<feature type="modified residue" description="Phosphoserine" evidence="9 10 11">
    <location sequence="Q14195-2">
        <position position="102"/>
    </location>
</feature>
<keyword id="KW-0002">3D-structure</keyword>
<keyword id="KW-0025">Alternative splicing</keyword>
<keyword id="KW-0966">Cell projection</keyword>
<keyword id="KW-0963">Cytoplasm</keyword>
<keyword id="KW-0903">Direct protein sequencing</keyword>
<keyword id="KW-0597">Phosphoprotein</keyword>
<keyword id="KW-1267">Proteomics identification</keyword>
<keyword id="KW-1185">Reference proteome</keyword>
<organism>
    <name type="scientific">Homo sapiens</name>
    <name type="common">Human</name>
    <dbReference type="NCBI Taxonomy" id="9606"/>
    <lineage>
        <taxon>Eukaryota</taxon>
        <taxon>Metazoa</taxon>
        <taxon>Chordata</taxon>
        <taxon>Craniata</taxon>
        <taxon>Vertebrata</taxon>
        <taxon>Euteleostomi</taxon>
        <taxon>Mammalia</taxon>
        <taxon>Eutheria</taxon>
        <taxon>Euarchontoglires</taxon>
        <taxon>Primates</taxon>
        <taxon>Haplorrhini</taxon>
        <taxon>Catarrhini</taxon>
        <taxon>Hominidae</taxon>
        <taxon>Homo</taxon>
    </lineage>
</organism>
<reference key="1">
    <citation type="journal article" date="1996" name="Gene">
        <title>A novel gene family defined by human dihydropyrimidinase and three related proteins with differential tissue distribution.</title>
        <authorList>
            <person name="Hamajima N."/>
            <person name="Matsuda K."/>
            <person name="Sakata S."/>
            <person name="Tamaki N."/>
            <person name="Sasaki M."/>
            <person name="Nonaka M."/>
        </authorList>
    </citation>
    <scope>NUCLEOTIDE SEQUENCE [MRNA] (ISOFORM 1)</scope>
    <source>
        <tissue>Brain</tissue>
    </source>
</reference>
<reference key="2">
    <citation type="journal article" date="1997" name="J. Biol. Chem.">
        <title>Identification and characterization of a retinoic acid-regulated human homologue of the unc-33-like phosphoprotein gene (hUlip) from neuroblastoma cells.</title>
        <authorList>
            <person name="Gaetano C."/>
            <person name="Matsuo T."/>
            <person name="Thiele C.J."/>
        </authorList>
    </citation>
    <scope>NUCLEOTIDE SEQUENCE [MRNA] (ISOFORM 1)</scope>
    <source>
        <tissue>Brain</tissue>
    </source>
</reference>
<reference key="3">
    <citation type="submission" date="2007-06" db="EMBL/GenBank/DDBJ databases">
        <title>Long form collapsin response mediator protein-1 (LCRMP-1) is a novel invasion enhancer: counter-regulation of cancer cell invasion by LCRMP-1 and CRMP-1.</title>
        <authorList>
            <person name="Pan S.-H."/>
            <person name="Hong T.-M."/>
            <person name="Chao Y.-C."/>
            <person name="Yang S.-C."/>
            <person name="Yang P.-C."/>
        </authorList>
    </citation>
    <scope>NUCLEOTIDE SEQUENCE [MRNA] (ISOFORM LCRMP-4)</scope>
</reference>
<reference key="4">
    <citation type="journal article" date="2004" name="Nature">
        <title>The DNA sequence and comparative analysis of human chromosome 5.</title>
        <authorList>
            <person name="Schmutz J."/>
            <person name="Martin J."/>
            <person name="Terry A."/>
            <person name="Couronne O."/>
            <person name="Grimwood J."/>
            <person name="Lowry S."/>
            <person name="Gordon L.A."/>
            <person name="Scott D."/>
            <person name="Xie G."/>
            <person name="Huang W."/>
            <person name="Hellsten U."/>
            <person name="Tran-Gyamfi M."/>
            <person name="She X."/>
            <person name="Prabhakar S."/>
            <person name="Aerts A."/>
            <person name="Altherr M."/>
            <person name="Bajorek E."/>
            <person name="Black S."/>
            <person name="Branscomb E."/>
            <person name="Caoile C."/>
            <person name="Challacombe J.F."/>
            <person name="Chan Y.M."/>
            <person name="Denys M."/>
            <person name="Detter J.C."/>
            <person name="Escobar J."/>
            <person name="Flowers D."/>
            <person name="Fotopulos D."/>
            <person name="Glavina T."/>
            <person name="Gomez M."/>
            <person name="Gonzales E."/>
            <person name="Goodstein D."/>
            <person name="Grigoriev I."/>
            <person name="Groza M."/>
            <person name="Hammon N."/>
            <person name="Hawkins T."/>
            <person name="Haydu L."/>
            <person name="Israni S."/>
            <person name="Jett J."/>
            <person name="Kadner K."/>
            <person name="Kimball H."/>
            <person name="Kobayashi A."/>
            <person name="Lopez F."/>
            <person name="Lou Y."/>
            <person name="Martinez D."/>
            <person name="Medina C."/>
            <person name="Morgan J."/>
            <person name="Nandkeshwar R."/>
            <person name="Noonan J.P."/>
            <person name="Pitluck S."/>
            <person name="Pollard M."/>
            <person name="Predki P."/>
            <person name="Priest J."/>
            <person name="Ramirez L."/>
            <person name="Retterer J."/>
            <person name="Rodriguez A."/>
            <person name="Rogers S."/>
            <person name="Salamov A."/>
            <person name="Salazar A."/>
            <person name="Thayer N."/>
            <person name="Tice H."/>
            <person name="Tsai M."/>
            <person name="Ustaszewska A."/>
            <person name="Vo N."/>
            <person name="Wheeler J."/>
            <person name="Wu K."/>
            <person name="Yang J."/>
            <person name="Dickson M."/>
            <person name="Cheng J.-F."/>
            <person name="Eichler E.E."/>
            <person name="Olsen A."/>
            <person name="Pennacchio L.A."/>
            <person name="Rokhsar D.S."/>
            <person name="Richardson P."/>
            <person name="Lucas S.M."/>
            <person name="Myers R.M."/>
            <person name="Rubin E.M."/>
        </authorList>
    </citation>
    <scope>NUCLEOTIDE SEQUENCE [LARGE SCALE GENOMIC DNA]</scope>
</reference>
<reference key="5">
    <citation type="submission" date="2008-12" db="UniProtKB">
        <authorList>
            <person name="Lubec G."/>
            <person name="Afjehi-Sadat L."/>
            <person name="Chen W.-Q."/>
            <person name="Sun Y."/>
        </authorList>
    </citation>
    <scope>PROTEIN SEQUENCE OF 24-56; 82-122; 131-157; 239-254; 259-268; 346-368; 375-397; 401-418; 424-440; 452-480; 488-511 AND 532-550</scope>
    <scope>IDENTIFICATION BY MASS SPECTROMETRY</scope>
    <source>
        <tissue>Brain</tissue>
        <tissue>Cajal-Retzius cell</tissue>
        <tissue>Fetal brain cortex</tissue>
    </source>
</reference>
<reference key="6">
    <citation type="journal article" date="2006" name="Cell">
        <title>Global, in vivo, and site-specific phosphorylation dynamics in signaling networks.</title>
        <authorList>
            <person name="Olsen J.V."/>
            <person name="Blagoev B."/>
            <person name="Gnad F."/>
            <person name="Macek B."/>
            <person name="Kumar C."/>
            <person name="Mortensen P."/>
            <person name="Mann M."/>
        </authorList>
    </citation>
    <scope>PHOSPHORYLATION [LARGE SCALE ANALYSIS] AT SER-102 (ISOFORM LCRMP-4)</scope>
    <scope>IDENTIFICATION BY MASS SPECTROMETRY [LARGE SCALE ANALYSIS]</scope>
    <source>
        <tissue>Cervix carcinoma</tissue>
    </source>
</reference>
<reference key="7">
    <citation type="journal article" date="2006" name="J. Biol. Chem.">
        <title>Distinct priming kinases contribute to differential regulation of collapsin response mediator proteins by glycogen synthase kinase-3 in vivo.</title>
        <authorList>
            <person name="Cole A.R."/>
            <person name="Causeret F."/>
            <person name="Yadirgi G."/>
            <person name="Hastie C.J."/>
            <person name="McLauchlan H."/>
            <person name="McManus E.J."/>
            <person name="Hernandez F."/>
            <person name="Eickholt B.J."/>
            <person name="Nikolic M."/>
            <person name="Sutherland C."/>
        </authorList>
    </citation>
    <scope>PHOSPHORYLATION AT SER-522 BY DYRK2</scope>
    <scope>PHOSPHORYLATION AT THR-509; THR-514 AND SER-518 BY GSK3</scope>
</reference>
<reference key="8">
    <citation type="journal article" date="2011" name="BMC Syst. Biol.">
        <title>Initial characterization of the human central proteome.</title>
        <authorList>
            <person name="Burkard T.R."/>
            <person name="Planyavsky M."/>
            <person name="Kaupe I."/>
            <person name="Breitwieser F.P."/>
            <person name="Buerckstuemmer T."/>
            <person name="Bennett K.L."/>
            <person name="Superti-Furga G."/>
            <person name="Colinge J."/>
        </authorList>
    </citation>
    <scope>IDENTIFICATION BY MASS SPECTROMETRY [LARGE SCALE ANALYSIS]</scope>
</reference>
<reference key="9">
    <citation type="journal article" date="2011" name="Sci. Signal.">
        <title>System-wide temporal characterization of the proteome and phosphoproteome of human embryonic stem cell differentiation.</title>
        <authorList>
            <person name="Rigbolt K.T."/>
            <person name="Prokhorova T.A."/>
            <person name="Akimov V."/>
            <person name="Henningsen J."/>
            <person name="Johansen P.T."/>
            <person name="Kratchmarova I."/>
            <person name="Kassem M."/>
            <person name="Mann M."/>
            <person name="Olsen J.V."/>
            <person name="Blagoev B."/>
        </authorList>
    </citation>
    <scope>PHOSPHORYLATION [LARGE SCALE ANALYSIS] AT SER-259; THR-509; THR-514 AND SER-522</scope>
    <scope>PHOSPHORYLATION [LARGE SCALE ANALYSIS] AT SER-102 (ISOFORM LCRMP-4)</scope>
    <scope>IDENTIFICATION BY MASS SPECTROMETRY [LARGE SCALE ANALYSIS]</scope>
</reference>
<reference key="10">
    <citation type="journal article" date="2014" name="J. Proteomics">
        <title>An enzyme assisted RP-RPLC approach for in-depth analysis of human liver phosphoproteome.</title>
        <authorList>
            <person name="Bian Y."/>
            <person name="Song C."/>
            <person name="Cheng K."/>
            <person name="Dong M."/>
            <person name="Wang F."/>
            <person name="Huang J."/>
            <person name="Sun D."/>
            <person name="Wang L."/>
            <person name="Ye M."/>
            <person name="Zou H."/>
        </authorList>
    </citation>
    <scope>PHOSPHORYLATION [LARGE SCALE ANALYSIS] AT THR-509 AND SER-522</scope>
    <scope>PHOSPHORYLATION [LARGE SCALE ANALYSIS] AT SER-102 (ISOFORM LCRMP-4)</scope>
    <scope>IDENTIFICATION BY MASS SPECTROMETRY [LARGE SCALE ANALYSIS]</scope>
    <source>
        <tissue>Liver</tissue>
    </source>
</reference>
<reference key="11">
    <citation type="journal article" date="2014" name="Nat. Commun.">
        <title>Amino- and carboxyl-terminal domains of Filamin-A interact with CRMP1 to mediate Sema3A signalling.</title>
        <authorList>
            <person name="Nakamura F."/>
            <person name="Kumeta K."/>
            <person name="Hida T."/>
            <person name="Isono T."/>
            <person name="Nakayama Y."/>
            <person name="Kuramata-Matsuoka E."/>
            <person name="Yamashita N."/>
            <person name="Uchida Y."/>
            <person name="Ogura K."/>
            <person name="Gengyo-Ando K."/>
            <person name="Mitani S."/>
            <person name="Ogino T."/>
            <person name="Goshima Y."/>
        </authorList>
    </citation>
    <scope>INTERACTION WITH FLNA</scope>
</reference>
<dbReference type="EMBL" id="D78014">
    <property type="protein sequence ID" value="BAA11192.1"/>
    <property type="molecule type" value="mRNA"/>
</dbReference>
<dbReference type="EMBL" id="Y07818">
    <property type="protein sequence ID" value="CAA69153.1"/>
    <property type="molecule type" value="mRNA"/>
</dbReference>
<dbReference type="EMBL" id="EU007906">
    <property type="protein sequence ID" value="ABV80252.1"/>
    <property type="molecule type" value="mRNA"/>
</dbReference>
<dbReference type="EMBL" id="AC011373">
    <property type="status" value="NOT_ANNOTATED_CDS"/>
    <property type="molecule type" value="Genomic_DNA"/>
</dbReference>
<dbReference type="CCDS" id="CCDS43381.1">
    <molecule id="Q14195-1"/>
</dbReference>
<dbReference type="CCDS" id="CCDS56387.1">
    <molecule id="Q14195-2"/>
</dbReference>
<dbReference type="PIR" id="JC5318">
    <property type="entry name" value="JC5318"/>
</dbReference>
<dbReference type="RefSeq" id="NP_001184223.1">
    <molecule id="Q14195-2"/>
    <property type="nucleotide sequence ID" value="NM_001197294.2"/>
</dbReference>
<dbReference type="RefSeq" id="NP_001378.1">
    <molecule id="Q14195-1"/>
    <property type="nucleotide sequence ID" value="NM_001387.3"/>
</dbReference>
<dbReference type="PDB" id="4BKN">
    <property type="method" value="X-ray"/>
    <property type="resolution" value="2.10 A"/>
    <property type="chains" value="A/B=1-570"/>
</dbReference>
<dbReference type="PDB" id="4CNS">
    <property type="method" value="X-ray"/>
    <property type="resolution" value="2.40 A"/>
    <property type="chains" value="A/B/C/D=13-490"/>
</dbReference>
<dbReference type="PDB" id="4CNT">
    <property type="method" value="X-ray"/>
    <property type="resolution" value="2.65 A"/>
    <property type="chains" value="A/B/C/D=1-570"/>
</dbReference>
<dbReference type="PDB" id="4CNU">
    <property type="method" value="X-ray"/>
    <property type="resolution" value="2.80 A"/>
    <property type="chains" value="A/B=1-570"/>
</dbReference>
<dbReference type="PDBsum" id="4BKN"/>
<dbReference type="PDBsum" id="4CNS"/>
<dbReference type="PDBsum" id="4CNT"/>
<dbReference type="PDBsum" id="4CNU"/>
<dbReference type="SMR" id="Q14195"/>
<dbReference type="BioGRID" id="108143">
    <property type="interactions" value="95"/>
</dbReference>
<dbReference type="FunCoup" id="Q14195">
    <property type="interactions" value="463"/>
</dbReference>
<dbReference type="IntAct" id="Q14195">
    <property type="interactions" value="49"/>
</dbReference>
<dbReference type="MINT" id="Q14195"/>
<dbReference type="STRING" id="9606.ENSP00000343690"/>
<dbReference type="MEROPS" id="M38.976"/>
<dbReference type="GlyGen" id="Q14195">
    <property type="glycosylation" value="2 sites, 1 O-linked glycan (1 site)"/>
</dbReference>
<dbReference type="iPTMnet" id="Q14195"/>
<dbReference type="MetOSite" id="Q14195"/>
<dbReference type="PhosphoSitePlus" id="Q14195"/>
<dbReference type="SwissPalm" id="Q14195"/>
<dbReference type="BioMuta" id="DPYSL3"/>
<dbReference type="DMDM" id="3122050"/>
<dbReference type="REPRODUCTION-2DPAGE" id="Q14195"/>
<dbReference type="jPOST" id="Q14195"/>
<dbReference type="MassIVE" id="Q14195"/>
<dbReference type="PaxDb" id="9606-ENSP00000343690"/>
<dbReference type="PeptideAtlas" id="Q14195"/>
<dbReference type="ProteomicsDB" id="59917">
    <molecule id="Q14195-1"/>
</dbReference>
<dbReference type="ProteomicsDB" id="59918">
    <molecule id="Q14195-2"/>
</dbReference>
<dbReference type="Pumba" id="Q14195"/>
<dbReference type="Antibodypedia" id="1526">
    <property type="antibodies" value="296 antibodies from 29 providers"/>
</dbReference>
<dbReference type="DNASU" id="1809"/>
<dbReference type="Ensembl" id="ENST00000343218.10">
    <molecule id="Q14195-2"/>
    <property type="protein sequence ID" value="ENSP00000343690.5"/>
    <property type="gene ID" value="ENSG00000113657.13"/>
</dbReference>
<dbReference type="Ensembl" id="ENST00000398514.7">
    <molecule id="Q14195-1"/>
    <property type="protein sequence ID" value="ENSP00000381526.3"/>
    <property type="gene ID" value="ENSG00000113657.13"/>
</dbReference>
<dbReference type="GeneID" id="1809"/>
<dbReference type="KEGG" id="hsa:1809"/>
<dbReference type="MANE-Select" id="ENST00000343218.10">
    <molecule id="Q14195-2"/>
    <property type="protein sequence ID" value="ENSP00000343690.5"/>
    <property type="RefSeq nucleotide sequence ID" value="NM_001197294.2"/>
    <property type="RefSeq protein sequence ID" value="NP_001184223.1"/>
</dbReference>
<dbReference type="UCSC" id="uc003lon.2">
    <molecule id="Q14195-1"/>
    <property type="organism name" value="human"/>
</dbReference>
<dbReference type="AGR" id="HGNC:3015"/>
<dbReference type="CTD" id="1809"/>
<dbReference type="DisGeNET" id="1809"/>
<dbReference type="GeneCards" id="DPYSL3"/>
<dbReference type="HGNC" id="HGNC:3015">
    <property type="gene designation" value="DPYSL3"/>
</dbReference>
<dbReference type="HPA" id="ENSG00000113657">
    <property type="expression patterns" value="Low tissue specificity"/>
</dbReference>
<dbReference type="MIM" id="601168">
    <property type="type" value="gene"/>
</dbReference>
<dbReference type="neXtProt" id="NX_Q14195"/>
<dbReference type="OpenTargets" id="ENSG00000113657"/>
<dbReference type="PharmGKB" id="PA27473"/>
<dbReference type="VEuPathDB" id="HostDB:ENSG00000113657"/>
<dbReference type="eggNOG" id="KOG2584">
    <property type="taxonomic scope" value="Eukaryota"/>
</dbReference>
<dbReference type="GeneTree" id="ENSGT01030000234527"/>
<dbReference type="HOGENOM" id="CLU_015572_2_2_1"/>
<dbReference type="InParanoid" id="Q14195"/>
<dbReference type="OMA" id="WVTAEVT"/>
<dbReference type="OrthoDB" id="10258955at2759"/>
<dbReference type="PAN-GO" id="Q14195">
    <property type="GO annotations" value="1 GO annotation based on evolutionary models"/>
</dbReference>
<dbReference type="PhylomeDB" id="Q14195"/>
<dbReference type="TreeFam" id="TF314706"/>
<dbReference type="PathwayCommons" id="Q14195"/>
<dbReference type="Reactome" id="R-HSA-399956">
    <property type="pathway name" value="CRMPs in Sema3A signaling"/>
</dbReference>
<dbReference type="SignaLink" id="Q14195"/>
<dbReference type="SIGNOR" id="Q14195"/>
<dbReference type="BioGRID-ORCS" id="1809">
    <property type="hits" value="8 hits in 1151 CRISPR screens"/>
</dbReference>
<dbReference type="CD-CODE" id="DEE660B4">
    <property type="entry name" value="Stress granule"/>
</dbReference>
<dbReference type="CD-CODE" id="FB4E32DD">
    <property type="entry name" value="Presynaptic clusters and postsynaptic densities"/>
</dbReference>
<dbReference type="ChiTaRS" id="DPYSL3">
    <property type="organism name" value="human"/>
</dbReference>
<dbReference type="EvolutionaryTrace" id="Q14195"/>
<dbReference type="GeneWiki" id="DPYSL3"/>
<dbReference type="GenomeRNAi" id="1809"/>
<dbReference type="Pharos" id="Q14195">
    <property type="development level" value="Tbio"/>
</dbReference>
<dbReference type="PRO" id="PR:Q14195"/>
<dbReference type="Proteomes" id="UP000005640">
    <property type="component" value="Chromosome 5"/>
</dbReference>
<dbReference type="RNAct" id="Q14195">
    <property type="molecule type" value="protein"/>
</dbReference>
<dbReference type="Bgee" id="ENSG00000113657">
    <property type="expression patterns" value="Expressed in cortical plate and 200 other cell types or tissues"/>
</dbReference>
<dbReference type="ExpressionAtlas" id="Q14195">
    <property type="expression patterns" value="baseline and differential"/>
</dbReference>
<dbReference type="GO" id="GO:0044297">
    <property type="term" value="C:cell body"/>
    <property type="evidence" value="ECO:0000250"/>
    <property type="project" value="UniProtKB"/>
</dbReference>
<dbReference type="GO" id="GO:0005829">
    <property type="term" value="C:cytosol"/>
    <property type="evidence" value="ECO:0000250"/>
    <property type="project" value="UniProtKB"/>
</dbReference>
<dbReference type="GO" id="GO:0070382">
    <property type="term" value="C:exocytic vesicle"/>
    <property type="evidence" value="ECO:0007669"/>
    <property type="project" value="Ensembl"/>
</dbReference>
<dbReference type="GO" id="GO:0005615">
    <property type="term" value="C:extracellular space"/>
    <property type="evidence" value="ECO:0000250"/>
    <property type="project" value="UniProtKB"/>
</dbReference>
<dbReference type="GO" id="GO:0031941">
    <property type="term" value="C:filamentous actin"/>
    <property type="evidence" value="ECO:0000250"/>
    <property type="project" value="UniProtKB"/>
</dbReference>
<dbReference type="GO" id="GO:0030426">
    <property type="term" value="C:growth cone"/>
    <property type="evidence" value="ECO:0000250"/>
    <property type="project" value="UniProtKB"/>
</dbReference>
<dbReference type="GO" id="GO:0030027">
    <property type="term" value="C:lamellipodium"/>
    <property type="evidence" value="ECO:0000250"/>
    <property type="project" value="UniProtKB"/>
</dbReference>
<dbReference type="GO" id="GO:0045202">
    <property type="term" value="C:synapse"/>
    <property type="evidence" value="ECO:0007669"/>
    <property type="project" value="Ensembl"/>
</dbReference>
<dbReference type="GO" id="GO:0035374">
    <property type="term" value="F:chondroitin sulfate binding"/>
    <property type="evidence" value="ECO:0000250"/>
    <property type="project" value="UniProtKB"/>
</dbReference>
<dbReference type="GO" id="GO:0031005">
    <property type="term" value="F:filamin binding"/>
    <property type="evidence" value="ECO:0000353"/>
    <property type="project" value="WormBase"/>
</dbReference>
<dbReference type="GO" id="GO:0016812">
    <property type="term" value="F:hydrolase activity, acting on carbon-nitrogen (but not peptide) bonds, in cyclic amides"/>
    <property type="evidence" value="ECO:0000318"/>
    <property type="project" value="GO_Central"/>
</dbReference>
<dbReference type="GO" id="GO:0042802">
    <property type="term" value="F:identical protein binding"/>
    <property type="evidence" value="ECO:0000250"/>
    <property type="project" value="UniProtKB"/>
</dbReference>
<dbReference type="GO" id="GO:0051219">
    <property type="term" value="F:phosphoprotein binding"/>
    <property type="evidence" value="ECO:0007669"/>
    <property type="project" value="Ensembl"/>
</dbReference>
<dbReference type="GO" id="GO:0017124">
    <property type="term" value="F:SH3 domain binding"/>
    <property type="evidence" value="ECO:0000250"/>
    <property type="project" value="UniProtKB"/>
</dbReference>
<dbReference type="GO" id="GO:0051764">
    <property type="term" value="P:actin crosslink formation"/>
    <property type="evidence" value="ECO:0000250"/>
    <property type="project" value="UniProtKB"/>
</dbReference>
<dbReference type="GO" id="GO:0051017">
    <property type="term" value="P:actin filament bundle assembly"/>
    <property type="evidence" value="ECO:0000250"/>
    <property type="project" value="UniProtKB"/>
</dbReference>
<dbReference type="GO" id="GO:0071345">
    <property type="term" value="P:cellular response to cytokine stimulus"/>
    <property type="evidence" value="ECO:0000250"/>
    <property type="project" value="UniProtKB"/>
</dbReference>
<dbReference type="GO" id="GO:0030336">
    <property type="term" value="P:negative regulation of cell migration"/>
    <property type="evidence" value="ECO:0000250"/>
    <property type="project" value="UniProtKB"/>
</dbReference>
<dbReference type="GO" id="GO:0010977">
    <property type="term" value="P:negative regulation of neuron projection development"/>
    <property type="evidence" value="ECO:0000250"/>
    <property type="project" value="UniProtKB"/>
</dbReference>
<dbReference type="GO" id="GO:0048666">
    <property type="term" value="P:neuron development"/>
    <property type="evidence" value="ECO:0007669"/>
    <property type="project" value="Ensembl"/>
</dbReference>
<dbReference type="GO" id="GO:0051491">
    <property type="term" value="P:positive regulation of filopodium assembly"/>
    <property type="evidence" value="ECO:0000250"/>
    <property type="project" value="UniProtKB"/>
</dbReference>
<dbReference type="GO" id="GO:0010976">
    <property type="term" value="P:positive regulation of neuron projection development"/>
    <property type="evidence" value="ECO:0000250"/>
    <property type="project" value="UniProtKB"/>
</dbReference>
<dbReference type="GO" id="GO:0048678">
    <property type="term" value="P:response to axon injury"/>
    <property type="evidence" value="ECO:0000250"/>
    <property type="project" value="UniProtKB"/>
</dbReference>
<dbReference type="CDD" id="cd01314">
    <property type="entry name" value="D-HYD"/>
    <property type="match status" value="1"/>
</dbReference>
<dbReference type="FunFam" id="2.30.40.10:FF:000021">
    <property type="entry name" value="Dihydropyrimidinase-related protein 2"/>
    <property type="match status" value="1"/>
</dbReference>
<dbReference type="FunFam" id="3.20.20.140:FF:000174">
    <property type="entry name" value="Dihydropyrimidinase-related protein 2"/>
    <property type="match status" value="1"/>
</dbReference>
<dbReference type="Gene3D" id="3.20.20.140">
    <property type="entry name" value="Metal-dependent hydrolases"/>
    <property type="match status" value="1"/>
</dbReference>
<dbReference type="Gene3D" id="2.30.40.10">
    <property type="entry name" value="Urease, subunit C, domain 1"/>
    <property type="match status" value="1"/>
</dbReference>
<dbReference type="InterPro" id="IPR006680">
    <property type="entry name" value="Amidohydro-rel"/>
</dbReference>
<dbReference type="InterPro" id="IPR011778">
    <property type="entry name" value="Hydantoinase/dihydroPyrase"/>
</dbReference>
<dbReference type="InterPro" id="IPR011059">
    <property type="entry name" value="Metal-dep_hydrolase_composite"/>
</dbReference>
<dbReference type="InterPro" id="IPR032466">
    <property type="entry name" value="Metal_Hydrolase"/>
</dbReference>
<dbReference type="InterPro" id="IPR050378">
    <property type="entry name" value="Metallo-dep_Hydrolases_sf"/>
</dbReference>
<dbReference type="NCBIfam" id="TIGR02033">
    <property type="entry name" value="D-hydantoinase"/>
    <property type="match status" value="1"/>
</dbReference>
<dbReference type="PANTHER" id="PTHR11647:SF57">
    <property type="entry name" value="DIHYDROPYRIMIDINASE-RELATED PROTEIN 3"/>
    <property type="match status" value="1"/>
</dbReference>
<dbReference type="PANTHER" id="PTHR11647">
    <property type="entry name" value="HYDRANTOINASE/DIHYDROPYRIMIDINASE FAMILY MEMBER"/>
    <property type="match status" value="1"/>
</dbReference>
<dbReference type="Pfam" id="PF01979">
    <property type="entry name" value="Amidohydro_1"/>
    <property type="match status" value="1"/>
</dbReference>
<dbReference type="SUPFAM" id="SSF51338">
    <property type="entry name" value="Composite domain of metallo-dependent hydrolases"/>
    <property type="match status" value="2"/>
</dbReference>
<dbReference type="SUPFAM" id="SSF51556">
    <property type="entry name" value="Metallo-dependent hydrolases"/>
    <property type="match status" value="1"/>
</dbReference>
<gene>
    <name type="primary">DPYSL3</name>
    <name type="synonym">CRMP4</name>
    <name type="synonym">DRP3</name>
    <name type="synonym">ULIP</name>
    <name type="synonym">ULIP1</name>
</gene>